<organism>
    <name type="scientific">Coccidioides immitis (strain RS)</name>
    <name type="common">Valley fever fungus</name>
    <dbReference type="NCBI Taxonomy" id="246410"/>
    <lineage>
        <taxon>Eukaryota</taxon>
        <taxon>Fungi</taxon>
        <taxon>Dikarya</taxon>
        <taxon>Ascomycota</taxon>
        <taxon>Pezizomycotina</taxon>
        <taxon>Eurotiomycetes</taxon>
        <taxon>Eurotiomycetidae</taxon>
        <taxon>Onygenales</taxon>
        <taxon>Onygenaceae</taxon>
        <taxon>Coccidioides</taxon>
    </lineage>
</organism>
<reference key="1">
    <citation type="journal article" date="2009" name="Genome Res.">
        <title>Comparative genomic analyses of the human fungal pathogens Coccidioides and their relatives.</title>
        <authorList>
            <person name="Sharpton T.J."/>
            <person name="Stajich J.E."/>
            <person name="Rounsley S.D."/>
            <person name="Gardner M.J."/>
            <person name="Wortman J.R."/>
            <person name="Jordar V.S."/>
            <person name="Maiti R."/>
            <person name="Kodira C.D."/>
            <person name="Neafsey D.E."/>
            <person name="Zeng Q."/>
            <person name="Hung C.-Y."/>
            <person name="McMahan C."/>
            <person name="Muszewska A."/>
            <person name="Grynberg M."/>
            <person name="Mandel M.A."/>
            <person name="Kellner E.M."/>
            <person name="Barker B.M."/>
            <person name="Galgiani J.N."/>
            <person name="Orbach M.J."/>
            <person name="Kirkland T.N."/>
            <person name="Cole G.T."/>
            <person name="Henn M.R."/>
            <person name="Birren B.W."/>
            <person name="Taylor J.W."/>
        </authorList>
    </citation>
    <scope>NUCLEOTIDE SEQUENCE [LARGE SCALE GENOMIC DNA]</scope>
    <source>
        <strain>RS</strain>
    </source>
</reference>
<reference key="2">
    <citation type="journal article" date="2010" name="Genome Res.">
        <title>Population genomic sequencing of Coccidioides fungi reveals recent hybridization and transposon control.</title>
        <authorList>
            <person name="Neafsey D.E."/>
            <person name="Barker B.M."/>
            <person name="Sharpton T.J."/>
            <person name="Stajich J.E."/>
            <person name="Park D.J."/>
            <person name="Whiston E."/>
            <person name="Hung C.-Y."/>
            <person name="McMahan C."/>
            <person name="White J."/>
            <person name="Sykes S."/>
            <person name="Heiman D."/>
            <person name="Young S."/>
            <person name="Zeng Q."/>
            <person name="Abouelleil A."/>
            <person name="Aftuck L."/>
            <person name="Bessette D."/>
            <person name="Brown A."/>
            <person name="FitzGerald M."/>
            <person name="Lui A."/>
            <person name="Macdonald J.P."/>
            <person name="Priest M."/>
            <person name="Orbach M.J."/>
            <person name="Galgiani J.N."/>
            <person name="Kirkland T.N."/>
            <person name="Cole G.T."/>
            <person name="Birren B.W."/>
            <person name="Henn M.R."/>
            <person name="Taylor J.W."/>
            <person name="Rounsley S.D."/>
        </authorList>
    </citation>
    <scope>GENOME REANNOTATION</scope>
    <source>
        <strain>RS</strain>
    </source>
</reference>
<protein>
    <recommendedName>
        <fullName>Histone chaperone ASF1</fullName>
    </recommendedName>
    <alternativeName>
        <fullName>Anti-silencing function protein 1</fullName>
    </alternativeName>
</protein>
<proteinExistence type="inferred from homology"/>
<comment type="function">
    <text evidence="1">Histone chaperone that facilitates histone deposition and histone exchange and removal during nucleosome assembly and disassembly.</text>
</comment>
<comment type="subunit">
    <text evidence="1">Interacts with histone H3 and histone H4.</text>
</comment>
<comment type="subcellular location">
    <subcellularLocation>
        <location evidence="1">Nucleus</location>
    </subcellularLocation>
</comment>
<comment type="similarity">
    <text evidence="4">Belongs to the ASF1 family.</text>
</comment>
<feature type="chain" id="PRO_0000284032" description="Histone chaperone ASF1">
    <location>
        <begin position="1"/>
        <end position="272"/>
    </location>
</feature>
<feature type="region of interest" description="Disordered" evidence="3">
    <location>
        <begin position="152"/>
        <end position="173"/>
    </location>
</feature>
<feature type="region of interest" description="Disordered" evidence="3">
    <location>
        <begin position="195"/>
        <end position="272"/>
    </location>
</feature>
<feature type="coiled-coil region" evidence="2">
    <location>
        <begin position="181"/>
        <end position="206"/>
    </location>
</feature>
<feature type="compositionally biased region" description="Basic and acidic residues" evidence="3">
    <location>
        <begin position="201"/>
        <end position="211"/>
    </location>
</feature>
<feature type="compositionally biased region" description="Acidic residues" evidence="3">
    <location>
        <begin position="212"/>
        <end position="253"/>
    </location>
</feature>
<feature type="compositionally biased region" description="Basic and acidic residues" evidence="3">
    <location>
        <begin position="261"/>
        <end position="272"/>
    </location>
</feature>
<gene>
    <name type="primary">ASF1</name>
    <name type="ORF">CIMG_03794</name>
</gene>
<dbReference type="EMBL" id="GG704916">
    <property type="protein sequence ID" value="EAS32770.3"/>
    <property type="molecule type" value="Genomic_DNA"/>
</dbReference>
<dbReference type="RefSeq" id="XP_001244353.1">
    <property type="nucleotide sequence ID" value="XM_001244352.2"/>
</dbReference>
<dbReference type="SMR" id="Q1E0W9"/>
<dbReference type="FunCoup" id="Q1E0W9">
    <property type="interactions" value="787"/>
</dbReference>
<dbReference type="STRING" id="246410.Q1E0W9"/>
<dbReference type="GeneID" id="4562957"/>
<dbReference type="KEGG" id="cim:CIMG_03794"/>
<dbReference type="VEuPathDB" id="FungiDB:CIMG_03794"/>
<dbReference type="InParanoid" id="Q1E0W9"/>
<dbReference type="OMA" id="CSYDERE"/>
<dbReference type="OrthoDB" id="29755at2759"/>
<dbReference type="Proteomes" id="UP000001261">
    <property type="component" value="Unassembled WGS sequence"/>
</dbReference>
<dbReference type="GO" id="GO:0000785">
    <property type="term" value="C:chromatin"/>
    <property type="evidence" value="ECO:0007669"/>
    <property type="project" value="TreeGrafter"/>
</dbReference>
<dbReference type="GO" id="GO:0005634">
    <property type="term" value="C:nucleus"/>
    <property type="evidence" value="ECO:0007669"/>
    <property type="project" value="UniProtKB-SubCell"/>
</dbReference>
<dbReference type="GO" id="GO:0042393">
    <property type="term" value="F:histone binding"/>
    <property type="evidence" value="ECO:0007669"/>
    <property type="project" value="InterPro"/>
</dbReference>
<dbReference type="GO" id="GO:0006335">
    <property type="term" value="P:DNA replication-dependent chromatin assembly"/>
    <property type="evidence" value="ECO:0007669"/>
    <property type="project" value="TreeGrafter"/>
</dbReference>
<dbReference type="GO" id="GO:0006334">
    <property type="term" value="P:nucleosome assembly"/>
    <property type="evidence" value="ECO:0007669"/>
    <property type="project" value="InterPro"/>
</dbReference>
<dbReference type="GO" id="GO:0006337">
    <property type="term" value="P:nucleosome disassembly"/>
    <property type="evidence" value="ECO:0007669"/>
    <property type="project" value="InterPro"/>
</dbReference>
<dbReference type="FunFam" id="2.60.40.1490:FF:000001">
    <property type="entry name" value="Histone chaperone ASF1"/>
    <property type="match status" value="1"/>
</dbReference>
<dbReference type="Gene3D" id="2.60.40.1490">
    <property type="entry name" value="Histone chaperone ASF1-like"/>
    <property type="match status" value="1"/>
</dbReference>
<dbReference type="InterPro" id="IPR006818">
    <property type="entry name" value="ASF1-like"/>
</dbReference>
<dbReference type="InterPro" id="IPR036747">
    <property type="entry name" value="ASF1-like_sf"/>
</dbReference>
<dbReference type="InterPro" id="IPR017282">
    <property type="entry name" value="Hist_deposition_Asf1"/>
</dbReference>
<dbReference type="PANTHER" id="PTHR12040">
    <property type="entry name" value="ANTI-SILENCING PROTEIN 1"/>
    <property type="match status" value="1"/>
</dbReference>
<dbReference type="PANTHER" id="PTHR12040:SF0">
    <property type="entry name" value="HISTONE CHAPERONE ASF1"/>
    <property type="match status" value="1"/>
</dbReference>
<dbReference type="Pfam" id="PF04729">
    <property type="entry name" value="ASF1_hist_chap"/>
    <property type="match status" value="1"/>
</dbReference>
<dbReference type="PIRSF" id="PIRSF037759">
    <property type="entry name" value="Histone_Asf1"/>
    <property type="match status" value="1"/>
</dbReference>
<dbReference type="SUPFAM" id="SSF101546">
    <property type="entry name" value="ASF1-like"/>
    <property type="match status" value="1"/>
</dbReference>
<name>ASF1_COCIM</name>
<sequence length="272" mass="30577">MSVVSLLGVRVLNNPAAFTAPYEFEITFECLEQLQKDLEWKLTYVGSATSSEYDQELDSLLVGPIPVGVNKFIFEADPPDLKRIPTSEILGVTVILLTCSYDGREFVRVGYYVNNEYDSEELNKEPPTKPIIERVRRNVLAEKPRVTRFHIKWDTDSDPTEFPPVQPDADVLEDDGETYGAEELELEAALKRELEELDSQDADKMDVGEGRDDVDDNESDAGSEDLEGETSGSDDEEEEEGFEGEDEDVEMGDDSNPTPDQHQHPNPEVMVH</sequence>
<evidence type="ECO:0000250" key="1"/>
<evidence type="ECO:0000255" key="2"/>
<evidence type="ECO:0000256" key="3">
    <source>
        <dbReference type="SAM" id="MobiDB-lite"/>
    </source>
</evidence>
<evidence type="ECO:0000305" key="4"/>
<accession>Q1E0W9</accession>
<accession>J3KCH3</accession>
<keyword id="KW-0143">Chaperone</keyword>
<keyword id="KW-0156">Chromatin regulator</keyword>
<keyword id="KW-0175">Coiled coil</keyword>
<keyword id="KW-0539">Nucleus</keyword>
<keyword id="KW-1185">Reference proteome</keyword>
<keyword id="KW-0804">Transcription</keyword>
<keyword id="KW-0805">Transcription regulation</keyword>